<evidence type="ECO:0000255" key="1"/>
<evidence type="ECO:0000305" key="2"/>
<accession>P35647</accession>
<organism>
    <name type="scientific">Eikenella corrodens</name>
    <dbReference type="NCBI Taxonomy" id="539"/>
    <lineage>
        <taxon>Bacteria</taxon>
        <taxon>Pseudomonadati</taxon>
        <taxon>Pseudomonadota</taxon>
        <taxon>Betaproteobacteria</taxon>
        <taxon>Neisseriales</taxon>
        <taxon>Neisseriaceae</taxon>
        <taxon>Eikenella</taxon>
    </lineage>
</organism>
<dbReference type="EMBL" id="Z12609">
    <property type="protein sequence ID" value="CAA78252.1"/>
    <property type="molecule type" value="Genomic_DNA"/>
</dbReference>
<dbReference type="PIR" id="A47698">
    <property type="entry name" value="A47698"/>
</dbReference>
<dbReference type="SMR" id="P35647"/>
<dbReference type="STRING" id="539.A7P85_02400"/>
<dbReference type="GO" id="GO:0005737">
    <property type="term" value="C:cytoplasm"/>
    <property type="evidence" value="ECO:0007669"/>
    <property type="project" value="InterPro"/>
</dbReference>
<dbReference type="GO" id="GO:0005886">
    <property type="term" value="C:plasma membrane"/>
    <property type="evidence" value="ECO:0007669"/>
    <property type="project" value="UniProtKB-SubCell"/>
</dbReference>
<dbReference type="GO" id="GO:0008757">
    <property type="term" value="F:S-adenosylmethionine-dependent methyltransferase activity"/>
    <property type="evidence" value="ECO:0007669"/>
    <property type="project" value="InterPro"/>
</dbReference>
<dbReference type="GO" id="GO:0046690">
    <property type="term" value="P:response to tellurium ion"/>
    <property type="evidence" value="ECO:0007669"/>
    <property type="project" value="InterPro"/>
</dbReference>
<dbReference type="CDD" id="cd02440">
    <property type="entry name" value="AdoMet_MTases"/>
    <property type="match status" value="1"/>
</dbReference>
<dbReference type="Gene3D" id="2.60.120.10">
    <property type="entry name" value="Jelly Rolls"/>
    <property type="match status" value="1"/>
</dbReference>
<dbReference type="Gene3D" id="3.40.50.150">
    <property type="entry name" value="Vaccinia Virus protein VP39"/>
    <property type="match status" value="1"/>
</dbReference>
<dbReference type="InterPro" id="IPR014710">
    <property type="entry name" value="RmlC-like_jellyroll"/>
</dbReference>
<dbReference type="InterPro" id="IPR029063">
    <property type="entry name" value="SAM-dependent_MTases_sf"/>
</dbReference>
<dbReference type="InterPro" id="IPR015985">
    <property type="entry name" value="TehB-like_dom"/>
</dbReference>
<dbReference type="InterPro" id="IPR004537">
    <property type="entry name" value="Tellurite-R_MeTrfase_TehB"/>
</dbReference>
<dbReference type="InterPro" id="IPR014431">
    <property type="entry name" value="Tellurite-R_TehB-2"/>
</dbReference>
<dbReference type="NCBIfam" id="NF008405">
    <property type="entry name" value="PRK11207.1"/>
    <property type="match status" value="1"/>
</dbReference>
<dbReference type="NCBIfam" id="NF008992">
    <property type="entry name" value="PRK12335.1"/>
    <property type="match status" value="1"/>
</dbReference>
<dbReference type="NCBIfam" id="TIGR00477">
    <property type="entry name" value="tehB"/>
    <property type="match status" value="1"/>
</dbReference>
<dbReference type="PANTHER" id="PTHR43464">
    <property type="entry name" value="METHYLTRANSFERASE"/>
    <property type="match status" value="1"/>
</dbReference>
<dbReference type="PANTHER" id="PTHR43464:SF49">
    <property type="entry name" value="TELLURITE METHYLTRANSFERASE"/>
    <property type="match status" value="1"/>
</dbReference>
<dbReference type="Pfam" id="PF03848">
    <property type="entry name" value="TehB"/>
    <property type="match status" value="1"/>
</dbReference>
<dbReference type="PIRSF" id="PIRSF005215">
    <property type="entry name" value="TehB"/>
    <property type="match status" value="1"/>
</dbReference>
<dbReference type="SUPFAM" id="SSF51197">
    <property type="entry name" value="Clavaminate synthase-like"/>
    <property type="match status" value="1"/>
</dbReference>
<dbReference type="SUPFAM" id="SSF53335">
    <property type="entry name" value="S-adenosyl-L-methionine-dependent methyltransferases"/>
    <property type="match status" value="1"/>
</dbReference>
<gene>
    <name type="primary">hag1</name>
</gene>
<comment type="function">
    <text>Induces agglutination of neuraminidase-treated erythrocytes.</text>
</comment>
<comment type="subcellular location">
    <subcellularLocation>
        <location evidence="2">Cell membrane</location>
        <topology evidence="2">Single-pass membrane protein</topology>
    </subcellularLocation>
</comment>
<name>HAG1_EIKCO</name>
<protein>
    <recommendedName>
        <fullName>Hemagglutinin 1</fullName>
    </recommendedName>
</protein>
<proteinExistence type="predicted"/>
<reference key="1">
    <citation type="journal article" date="1993" name="J. Gen. Microbiol.">
        <title>Cloning, characterization and sequencing of two haemagglutinin genes from Eikenella corrodens.</title>
        <authorList>
            <person name="Rao V.K."/>
            <person name="Whitlock J.A."/>
            <person name="Progulske-Fox A."/>
        </authorList>
    </citation>
    <scope>NUCLEOTIDE SEQUENCE [GENOMIC DNA]</scope>
    <source>
        <strain>ATCC 23834 / DSM 8340 / JCM 12952 / KCTC 15198 / LMG 15557 / NCTC 10596 / 333/54-55</strain>
    </source>
</reference>
<keyword id="KW-1003">Cell membrane</keyword>
<keyword id="KW-0348">Hemagglutinin</keyword>
<keyword id="KW-0472">Membrane</keyword>
<keyword id="KW-0812">Transmembrane</keyword>
<keyword id="KW-1133">Transmembrane helix</keyword>
<feature type="chain" id="PRO_0000083888" description="Hemagglutinin 1">
    <location>
        <begin position="1"/>
        <end position="300"/>
    </location>
</feature>
<feature type="transmembrane region" description="Helical" evidence="1">
    <location>
        <begin position="200"/>
        <end position="221"/>
    </location>
</feature>
<sequence>MVSALSCTHERRCYAIRTHLLQNYAGMGLSHYSGSSFVAAQHTGWYLRQAARIARAAEVFELQEDGTVLAEHILQPDSGVWTLYPQAQHKVEPLDDDFAVQLEFHCEKADYFHKKHGMTTTHSAIREAVQTVAPCKTLDLGCGQGHNALFLSLAGYDVRAVDHSPAAVASVLDMAAREQLPLRADAYDINAAALNEDYDFIFATVVFIFLQAGRVPEIIADMQAHTRPGGYNLIVSAMDTADYPCHMPFSFTFKEDELRQYYADWELLKYEEAVGLMHATDAQGRPIQLKFVTMLAKKPG</sequence>